<comment type="function">
    <text evidence="1">Together with the chaperonin GroEL, plays an essential role in assisting protein folding. The GroEL-GroES system forms a nano-cage that allows encapsulation of the non-native substrate proteins and provides a physical environment optimized to promote and accelerate protein folding. GroES binds to the apical surface of the GroEL ring, thereby capping the opening of the GroEL channel.</text>
</comment>
<comment type="subunit">
    <text evidence="1">Heptamer of 7 subunits arranged in a ring. Interacts with the chaperonin GroEL.</text>
</comment>
<comment type="subcellular location">
    <subcellularLocation>
        <location evidence="1">Cytoplasm</location>
    </subcellularLocation>
</comment>
<comment type="similarity">
    <text evidence="1 2">Belongs to the GroES chaperonin family.</text>
</comment>
<protein>
    <recommendedName>
        <fullName evidence="1">Co-chaperonin GroES</fullName>
    </recommendedName>
    <alternativeName>
        <fullName evidence="1">10 kDa chaperonin</fullName>
    </alternativeName>
    <alternativeName>
        <fullName evidence="1">Chaperonin-10</fullName>
        <shortName evidence="1">Cpn10</shortName>
    </alternativeName>
</protein>
<proteinExistence type="inferred from homology"/>
<feature type="chain" id="PRO_0000174854" description="Co-chaperonin GroES">
    <location>
        <begin position="1"/>
        <end position="102"/>
    </location>
</feature>
<sequence length="102" mass="10988">MTTASSKVAIKPLEDRIVVQPLDAEQTTASGLVIPDTAKEKPQEGVVLAVGPGRFENGERLPLDVKTGDVVLYSKYGGTEVKYNGEEYLVLSARDVLAIIEK</sequence>
<dbReference type="EMBL" id="M76657">
    <property type="protein sequence ID" value="AAA26752.1"/>
    <property type="molecule type" value="Genomic_DNA"/>
</dbReference>
<dbReference type="SMR" id="Q00769"/>
<dbReference type="GO" id="GO:0005737">
    <property type="term" value="C:cytoplasm"/>
    <property type="evidence" value="ECO:0007669"/>
    <property type="project" value="UniProtKB-SubCell"/>
</dbReference>
<dbReference type="GO" id="GO:0005524">
    <property type="term" value="F:ATP binding"/>
    <property type="evidence" value="ECO:0007669"/>
    <property type="project" value="InterPro"/>
</dbReference>
<dbReference type="GO" id="GO:0046872">
    <property type="term" value="F:metal ion binding"/>
    <property type="evidence" value="ECO:0007669"/>
    <property type="project" value="TreeGrafter"/>
</dbReference>
<dbReference type="GO" id="GO:0044183">
    <property type="term" value="F:protein folding chaperone"/>
    <property type="evidence" value="ECO:0007669"/>
    <property type="project" value="InterPro"/>
</dbReference>
<dbReference type="GO" id="GO:0051087">
    <property type="term" value="F:protein-folding chaperone binding"/>
    <property type="evidence" value="ECO:0007669"/>
    <property type="project" value="TreeGrafter"/>
</dbReference>
<dbReference type="GO" id="GO:0051082">
    <property type="term" value="F:unfolded protein binding"/>
    <property type="evidence" value="ECO:0007669"/>
    <property type="project" value="TreeGrafter"/>
</dbReference>
<dbReference type="GO" id="GO:0051085">
    <property type="term" value="P:chaperone cofactor-dependent protein refolding"/>
    <property type="evidence" value="ECO:0007669"/>
    <property type="project" value="TreeGrafter"/>
</dbReference>
<dbReference type="CDD" id="cd00320">
    <property type="entry name" value="cpn10"/>
    <property type="match status" value="1"/>
</dbReference>
<dbReference type="FunFam" id="2.30.33.40:FF:000001">
    <property type="entry name" value="10 kDa chaperonin"/>
    <property type="match status" value="1"/>
</dbReference>
<dbReference type="Gene3D" id="2.30.33.40">
    <property type="entry name" value="GroES chaperonin"/>
    <property type="match status" value="1"/>
</dbReference>
<dbReference type="HAMAP" id="MF_00580">
    <property type="entry name" value="CH10"/>
    <property type="match status" value="1"/>
</dbReference>
<dbReference type="InterPro" id="IPR020818">
    <property type="entry name" value="Chaperonin_GroES"/>
</dbReference>
<dbReference type="InterPro" id="IPR037124">
    <property type="entry name" value="Chaperonin_GroES_sf"/>
</dbReference>
<dbReference type="InterPro" id="IPR018369">
    <property type="entry name" value="Chaprnonin_Cpn10_CS"/>
</dbReference>
<dbReference type="InterPro" id="IPR011032">
    <property type="entry name" value="GroES-like_sf"/>
</dbReference>
<dbReference type="NCBIfam" id="NF001530">
    <property type="entry name" value="PRK00364.1-6"/>
    <property type="match status" value="1"/>
</dbReference>
<dbReference type="NCBIfam" id="NF001531">
    <property type="entry name" value="PRK00364.2-2"/>
    <property type="match status" value="1"/>
</dbReference>
<dbReference type="NCBIfam" id="NF001533">
    <property type="entry name" value="PRK00364.2-4"/>
    <property type="match status" value="1"/>
</dbReference>
<dbReference type="NCBIfam" id="NF001534">
    <property type="entry name" value="PRK00364.2-5"/>
    <property type="match status" value="1"/>
</dbReference>
<dbReference type="PANTHER" id="PTHR10772">
    <property type="entry name" value="10 KDA HEAT SHOCK PROTEIN"/>
    <property type="match status" value="1"/>
</dbReference>
<dbReference type="PANTHER" id="PTHR10772:SF58">
    <property type="entry name" value="CO-CHAPERONIN GROES"/>
    <property type="match status" value="1"/>
</dbReference>
<dbReference type="Pfam" id="PF00166">
    <property type="entry name" value="Cpn10"/>
    <property type="match status" value="1"/>
</dbReference>
<dbReference type="PRINTS" id="PR00297">
    <property type="entry name" value="CHAPERONIN10"/>
</dbReference>
<dbReference type="SMART" id="SM00883">
    <property type="entry name" value="Cpn10"/>
    <property type="match status" value="1"/>
</dbReference>
<dbReference type="SUPFAM" id="SSF50129">
    <property type="entry name" value="GroES-like"/>
    <property type="match status" value="1"/>
</dbReference>
<dbReference type="PROSITE" id="PS00681">
    <property type="entry name" value="CHAPERONINS_CPN10"/>
    <property type="match status" value="1"/>
</dbReference>
<organism>
    <name type="scientific">Streptomyces albus G</name>
    <dbReference type="NCBI Taxonomy" id="1962"/>
    <lineage>
        <taxon>Bacteria</taxon>
        <taxon>Bacillati</taxon>
        <taxon>Actinomycetota</taxon>
        <taxon>Actinomycetes</taxon>
        <taxon>Kitasatosporales</taxon>
        <taxon>Streptomycetaceae</taxon>
        <taxon>Streptomyces</taxon>
    </lineage>
</organism>
<gene>
    <name evidence="1" type="primary">groES</name>
    <name evidence="1" type="synonym">groS</name>
</gene>
<evidence type="ECO:0000255" key="1">
    <source>
        <dbReference type="HAMAP-Rule" id="MF_00580"/>
    </source>
</evidence>
<evidence type="ECO:0000305" key="2"/>
<reference key="1">
    <citation type="journal article" date="1991" name="J. Bacteriol.">
        <title>Characterization of the groEL-like genes in Streptomyces albus.</title>
        <authorList>
            <person name="Mazodier P."/>
            <person name="Guglielmi G."/>
            <person name="Davies J."/>
            <person name="Thompson C.J."/>
        </authorList>
    </citation>
    <scope>NUCLEOTIDE SEQUENCE [GENOMIC DNA]</scope>
</reference>
<accession>Q00769</accession>
<name>CH10_STRAL</name>
<keyword id="KW-0143">Chaperone</keyword>
<keyword id="KW-0963">Cytoplasm</keyword>